<reference key="1">
    <citation type="journal article" date="2002" name="Nature">
        <title>Complete genome sequence of the model actinomycete Streptomyces coelicolor A3(2).</title>
        <authorList>
            <person name="Bentley S.D."/>
            <person name="Chater K.F."/>
            <person name="Cerdeno-Tarraga A.-M."/>
            <person name="Challis G.L."/>
            <person name="Thomson N.R."/>
            <person name="James K.D."/>
            <person name="Harris D.E."/>
            <person name="Quail M.A."/>
            <person name="Kieser H."/>
            <person name="Harper D."/>
            <person name="Bateman A."/>
            <person name="Brown S."/>
            <person name="Chandra G."/>
            <person name="Chen C.W."/>
            <person name="Collins M."/>
            <person name="Cronin A."/>
            <person name="Fraser A."/>
            <person name="Goble A."/>
            <person name="Hidalgo J."/>
            <person name="Hornsby T."/>
            <person name="Howarth S."/>
            <person name="Huang C.-H."/>
            <person name="Kieser T."/>
            <person name="Larke L."/>
            <person name="Murphy L.D."/>
            <person name="Oliver K."/>
            <person name="O'Neil S."/>
            <person name="Rabbinowitsch E."/>
            <person name="Rajandream M.A."/>
            <person name="Rutherford K.M."/>
            <person name="Rutter S."/>
            <person name="Seeger K."/>
            <person name="Saunders D."/>
            <person name="Sharp S."/>
            <person name="Squares R."/>
            <person name="Squares S."/>
            <person name="Taylor K."/>
            <person name="Warren T."/>
            <person name="Wietzorrek A."/>
            <person name="Woodward J.R."/>
            <person name="Barrell B.G."/>
            <person name="Parkhill J."/>
            <person name="Hopwood D.A."/>
        </authorList>
    </citation>
    <scope>NUCLEOTIDE SEQUENCE [LARGE SCALE GENOMIC DNA]</scope>
    <source>
        <strain>ATCC BAA-471 / A3(2) / M145</strain>
    </source>
</reference>
<dbReference type="EC" id="4.1.1.37" evidence="1"/>
<dbReference type="EMBL" id="AL939126">
    <property type="protein sequence ID" value="CAA19243.1"/>
    <property type="molecule type" value="Genomic_DNA"/>
</dbReference>
<dbReference type="PIR" id="T34711">
    <property type="entry name" value="T34711"/>
</dbReference>
<dbReference type="RefSeq" id="NP_630142.1">
    <property type="nucleotide sequence ID" value="NC_003888.3"/>
</dbReference>
<dbReference type="RefSeq" id="WP_003972892.1">
    <property type="nucleotide sequence ID" value="NZ_VNID01000009.1"/>
</dbReference>
<dbReference type="SMR" id="O69861"/>
<dbReference type="FunCoup" id="O69861">
    <property type="interactions" value="531"/>
</dbReference>
<dbReference type="STRING" id="100226.gene:17763690"/>
<dbReference type="PaxDb" id="100226-SCO6031"/>
<dbReference type="GeneID" id="91383017"/>
<dbReference type="KEGG" id="sco:SCO6031"/>
<dbReference type="PATRIC" id="fig|100226.15.peg.6131"/>
<dbReference type="eggNOG" id="COG0407">
    <property type="taxonomic scope" value="Bacteria"/>
</dbReference>
<dbReference type="HOGENOM" id="CLU_040933_0_1_11"/>
<dbReference type="InParanoid" id="O69861"/>
<dbReference type="OrthoDB" id="9806656at2"/>
<dbReference type="PhylomeDB" id="O69861"/>
<dbReference type="UniPathway" id="UPA00251">
    <property type="reaction ID" value="UER00321"/>
</dbReference>
<dbReference type="Proteomes" id="UP000001973">
    <property type="component" value="Chromosome"/>
</dbReference>
<dbReference type="GO" id="GO:0005829">
    <property type="term" value="C:cytosol"/>
    <property type="evidence" value="ECO:0000318"/>
    <property type="project" value="GO_Central"/>
</dbReference>
<dbReference type="GO" id="GO:0004853">
    <property type="term" value="F:uroporphyrinogen decarboxylase activity"/>
    <property type="evidence" value="ECO:0000318"/>
    <property type="project" value="GO_Central"/>
</dbReference>
<dbReference type="GO" id="GO:0006783">
    <property type="term" value="P:heme biosynthetic process"/>
    <property type="evidence" value="ECO:0000318"/>
    <property type="project" value="GO_Central"/>
</dbReference>
<dbReference type="GO" id="GO:0006782">
    <property type="term" value="P:protoporphyrinogen IX biosynthetic process"/>
    <property type="evidence" value="ECO:0007669"/>
    <property type="project" value="UniProtKB-UniRule"/>
</dbReference>
<dbReference type="CDD" id="cd00717">
    <property type="entry name" value="URO-D"/>
    <property type="match status" value="1"/>
</dbReference>
<dbReference type="FunFam" id="3.20.20.210:FF:000005">
    <property type="entry name" value="Uroporphyrinogen decarboxylase"/>
    <property type="match status" value="1"/>
</dbReference>
<dbReference type="Gene3D" id="3.20.20.210">
    <property type="match status" value="1"/>
</dbReference>
<dbReference type="HAMAP" id="MF_00218">
    <property type="entry name" value="URO_D"/>
    <property type="match status" value="1"/>
</dbReference>
<dbReference type="InterPro" id="IPR038071">
    <property type="entry name" value="UROD/MetE-like_sf"/>
</dbReference>
<dbReference type="InterPro" id="IPR006361">
    <property type="entry name" value="Uroporphyrinogen_deCO2ase_HemE"/>
</dbReference>
<dbReference type="InterPro" id="IPR000257">
    <property type="entry name" value="Uroporphyrinogen_deCOase"/>
</dbReference>
<dbReference type="NCBIfam" id="TIGR01464">
    <property type="entry name" value="hemE"/>
    <property type="match status" value="1"/>
</dbReference>
<dbReference type="PANTHER" id="PTHR21091">
    <property type="entry name" value="METHYLTETRAHYDROFOLATE:HOMOCYSTEINE METHYLTRANSFERASE RELATED"/>
    <property type="match status" value="1"/>
</dbReference>
<dbReference type="PANTHER" id="PTHR21091:SF169">
    <property type="entry name" value="UROPORPHYRINOGEN DECARBOXYLASE"/>
    <property type="match status" value="1"/>
</dbReference>
<dbReference type="Pfam" id="PF01208">
    <property type="entry name" value="URO-D"/>
    <property type="match status" value="1"/>
</dbReference>
<dbReference type="SUPFAM" id="SSF51726">
    <property type="entry name" value="UROD/MetE-like"/>
    <property type="match status" value="1"/>
</dbReference>
<dbReference type="PROSITE" id="PS00906">
    <property type="entry name" value="UROD_1"/>
    <property type="match status" value="1"/>
</dbReference>
<dbReference type="PROSITE" id="PS00907">
    <property type="entry name" value="UROD_2"/>
    <property type="match status" value="1"/>
</dbReference>
<keyword id="KW-0963">Cytoplasm</keyword>
<keyword id="KW-0210">Decarboxylase</keyword>
<keyword id="KW-0456">Lyase</keyword>
<keyword id="KW-0627">Porphyrin biosynthesis</keyword>
<keyword id="KW-1185">Reference proteome</keyword>
<accession>O69861</accession>
<evidence type="ECO:0000255" key="1">
    <source>
        <dbReference type="HAMAP-Rule" id="MF_00218"/>
    </source>
</evidence>
<comment type="function">
    <text evidence="1">Catalyzes the decarboxylation of four acetate groups of uroporphyrinogen-III to yield coproporphyrinogen-III.</text>
</comment>
<comment type="catalytic activity">
    <reaction evidence="1">
        <text>uroporphyrinogen III + 4 H(+) = coproporphyrinogen III + 4 CO2</text>
        <dbReference type="Rhea" id="RHEA:19865"/>
        <dbReference type="ChEBI" id="CHEBI:15378"/>
        <dbReference type="ChEBI" id="CHEBI:16526"/>
        <dbReference type="ChEBI" id="CHEBI:57308"/>
        <dbReference type="ChEBI" id="CHEBI:57309"/>
        <dbReference type="EC" id="4.1.1.37"/>
    </reaction>
</comment>
<comment type="pathway">
    <text evidence="1">Porphyrin-containing compound metabolism; protoporphyrin-IX biosynthesis; coproporphyrinogen-III from 5-aminolevulinate: step 4/4.</text>
</comment>
<comment type="subunit">
    <text evidence="1">Homodimer.</text>
</comment>
<comment type="subcellular location">
    <subcellularLocation>
        <location evidence="1">Cytoplasm</location>
    </subcellularLocation>
</comment>
<comment type="similarity">
    <text evidence="1">Belongs to the uroporphyrinogen decarboxylase family.</text>
</comment>
<gene>
    <name evidence="1" type="primary">hemE</name>
    <name type="ordered locus">SCO6031</name>
    <name type="ORF">SC1C3.19</name>
</gene>
<name>DCUP_STRCO</name>
<organism>
    <name type="scientific">Streptomyces coelicolor (strain ATCC BAA-471 / A3(2) / M145)</name>
    <dbReference type="NCBI Taxonomy" id="100226"/>
    <lineage>
        <taxon>Bacteria</taxon>
        <taxon>Bacillati</taxon>
        <taxon>Actinomycetota</taxon>
        <taxon>Actinomycetes</taxon>
        <taxon>Kitasatosporales</taxon>
        <taxon>Streptomycetaceae</taxon>
        <taxon>Streptomyces</taxon>
        <taxon>Streptomyces albidoflavus group</taxon>
    </lineage>
</organism>
<sequence>MSANQSPAGQPPTATYDSAFLKACRREPVPHTPVWFMRQAGRSLPEYLKVREGIPMLESCMRPELVAEITLQPVRRHGVDAAVYFSDIVVPLKAIGIDLDIKPGVGPVIAEPIRTRADLARLRDLTPEDVAYVTEAFGLLTRELGATPLIGFAGAPFTLASYLVEGGPSRNHEHTKALMYGDPQLWADLLDRLAGITAAFLKVQIEAGASAVQLFDSWVGALSPADYRRSVLPASRKVFEAVSGYGVPRIHFGVGTGELLGLLGEAGADVVGVDWRVPLDEAARRVGPGKALQGNLDPAVLFAGREAVETKTREVLDAATGLEGHVFNLGHGVLPTTDPDALTRLVEYVHTQTTR</sequence>
<feature type="chain" id="PRO_0000187648" description="Uroporphyrinogen decarboxylase">
    <location>
        <begin position="1"/>
        <end position="355"/>
    </location>
</feature>
<feature type="binding site" evidence="1">
    <location>
        <begin position="38"/>
        <end position="42"/>
    </location>
    <ligand>
        <name>substrate</name>
    </ligand>
</feature>
<feature type="binding site" evidence="1">
    <location>
        <position position="87"/>
    </location>
    <ligand>
        <name>substrate</name>
    </ligand>
</feature>
<feature type="binding site" evidence="1">
    <location>
        <position position="162"/>
    </location>
    <ligand>
        <name>substrate</name>
    </ligand>
</feature>
<feature type="binding site" evidence="1">
    <location>
        <position position="217"/>
    </location>
    <ligand>
        <name>substrate</name>
    </ligand>
</feature>
<feature type="binding site" evidence="1">
    <location>
        <position position="331"/>
    </location>
    <ligand>
        <name>substrate</name>
    </ligand>
</feature>
<feature type="site" description="Transition state stabilizer" evidence="1">
    <location>
        <position position="87"/>
    </location>
</feature>
<proteinExistence type="inferred from homology"/>
<protein>
    <recommendedName>
        <fullName evidence="1">Uroporphyrinogen decarboxylase</fullName>
        <shortName evidence="1">UPD</shortName>
        <shortName evidence="1">URO-D</shortName>
        <ecNumber evidence="1">4.1.1.37</ecNumber>
    </recommendedName>
</protein>